<name>RK33_CERDE</name>
<feature type="chain" id="PRO_0000356790" description="Large ribosomal subunit protein bL33c">
    <location>
        <begin position="1"/>
        <end position="66"/>
    </location>
</feature>
<dbReference type="EMBL" id="EF614270">
    <property type="protein sequence ID" value="ABQ81471.1"/>
    <property type="molecule type" value="Genomic_DNA"/>
</dbReference>
<dbReference type="RefSeq" id="YP_001542468.1">
    <property type="nucleotide sequence ID" value="NC_009962.1"/>
</dbReference>
<dbReference type="GeneID" id="5729423"/>
<dbReference type="GO" id="GO:0009507">
    <property type="term" value="C:chloroplast"/>
    <property type="evidence" value="ECO:0007669"/>
    <property type="project" value="UniProtKB-SubCell"/>
</dbReference>
<dbReference type="GO" id="GO:1990904">
    <property type="term" value="C:ribonucleoprotein complex"/>
    <property type="evidence" value="ECO:0007669"/>
    <property type="project" value="UniProtKB-KW"/>
</dbReference>
<dbReference type="GO" id="GO:0005840">
    <property type="term" value="C:ribosome"/>
    <property type="evidence" value="ECO:0007669"/>
    <property type="project" value="UniProtKB-KW"/>
</dbReference>
<dbReference type="GO" id="GO:0003735">
    <property type="term" value="F:structural constituent of ribosome"/>
    <property type="evidence" value="ECO:0007669"/>
    <property type="project" value="InterPro"/>
</dbReference>
<dbReference type="GO" id="GO:0006412">
    <property type="term" value="P:translation"/>
    <property type="evidence" value="ECO:0007669"/>
    <property type="project" value="UniProtKB-UniRule"/>
</dbReference>
<dbReference type="Gene3D" id="2.20.28.120">
    <property type="entry name" value="Ribosomal protein L33"/>
    <property type="match status" value="1"/>
</dbReference>
<dbReference type="HAMAP" id="MF_00294">
    <property type="entry name" value="Ribosomal_bL33"/>
    <property type="match status" value="1"/>
</dbReference>
<dbReference type="InterPro" id="IPR001705">
    <property type="entry name" value="Ribosomal_bL33"/>
</dbReference>
<dbReference type="InterPro" id="IPR018264">
    <property type="entry name" value="Ribosomal_bL33_CS"/>
</dbReference>
<dbReference type="InterPro" id="IPR038584">
    <property type="entry name" value="Ribosomal_bL33_sf"/>
</dbReference>
<dbReference type="InterPro" id="IPR011332">
    <property type="entry name" value="Ribosomal_zn-bd"/>
</dbReference>
<dbReference type="NCBIfam" id="NF001764">
    <property type="entry name" value="PRK00504.1"/>
    <property type="match status" value="1"/>
</dbReference>
<dbReference type="NCBIfam" id="NF001860">
    <property type="entry name" value="PRK00595.1"/>
    <property type="match status" value="1"/>
</dbReference>
<dbReference type="NCBIfam" id="TIGR01023">
    <property type="entry name" value="rpmG_bact"/>
    <property type="match status" value="1"/>
</dbReference>
<dbReference type="PANTHER" id="PTHR43168">
    <property type="entry name" value="50S RIBOSOMAL PROTEIN L33, CHLOROPLASTIC"/>
    <property type="match status" value="1"/>
</dbReference>
<dbReference type="PANTHER" id="PTHR43168:SF2">
    <property type="entry name" value="LARGE RIBOSOMAL SUBUNIT PROTEIN BL33C"/>
    <property type="match status" value="1"/>
</dbReference>
<dbReference type="Pfam" id="PF00471">
    <property type="entry name" value="Ribosomal_L33"/>
    <property type="match status" value="1"/>
</dbReference>
<dbReference type="SUPFAM" id="SSF57829">
    <property type="entry name" value="Zn-binding ribosomal proteins"/>
    <property type="match status" value="1"/>
</dbReference>
<dbReference type="PROSITE" id="PS00582">
    <property type="entry name" value="RIBOSOMAL_L33"/>
    <property type="match status" value="1"/>
</dbReference>
<comment type="subcellular location">
    <subcellularLocation>
        <location>Plastid</location>
        <location>Chloroplast</location>
    </subcellularLocation>
</comment>
<comment type="similarity">
    <text evidence="1">Belongs to the bacterial ribosomal protein bL33 family.</text>
</comment>
<evidence type="ECO:0000255" key="1">
    <source>
        <dbReference type="HAMAP-Rule" id="MF_00294"/>
    </source>
</evidence>
<evidence type="ECO:0000305" key="2"/>
<keyword id="KW-0150">Chloroplast</keyword>
<keyword id="KW-0934">Plastid</keyword>
<keyword id="KW-0687">Ribonucleoprotein</keyword>
<keyword id="KW-0689">Ribosomal protein</keyword>
<organism>
    <name type="scientific">Ceratophyllum demersum</name>
    <name type="common">Rigid hornwort</name>
    <name type="synonym">Coontail</name>
    <dbReference type="NCBI Taxonomy" id="4428"/>
    <lineage>
        <taxon>Eukaryota</taxon>
        <taxon>Viridiplantae</taxon>
        <taxon>Streptophyta</taxon>
        <taxon>Embryophyta</taxon>
        <taxon>Tracheophyta</taxon>
        <taxon>Spermatophyta</taxon>
        <taxon>Magnoliopsida</taxon>
        <taxon>Ceratophyllales</taxon>
        <taxon>Ceratophyllaceae</taxon>
        <taxon>Ceratophyllum</taxon>
    </lineage>
</organism>
<reference key="1">
    <citation type="journal article" date="2007" name="Proc. Natl. Acad. Sci. U.S.A.">
        <title>Using plastid genome-scale data to resolve enigmatic relationships among basal angiosperms.</title>
        <authorList>
            <person name="Moore M.J."/>
            <person name="Bell C.D."/>
            <person name="Soltis P.S."/>
            <person name="Soltis D.E."/>
        </authorList>
    </citation>
    <scope>NUCLEOTIDE SEQUENCE [LARGE SCALE GENOMIC DNA]</scope>
</reference>
<accession>A8SEC4</accession>
<sequence>MAKGKDVRVRVILECTSCARNGGNKESRGISRYITQKNRHNTPSRLELRKFCPYCYKHTTHGEIKK</sequence>
<proteinExistence type="inferred from homology"/>
<protein>
    <recommendedName>
        <fullName evidence="1">Large ribosomal subunit protein bL33c</fullName>
    </recommendedName>
    <alternativeName>
        <fullName evidence="2">50S ribosomal protein L33, chloroplastic</fullName>
    </alternativeName>
</protein>
<gene>
    <name evidence="1" type="primary">rpl33</name>
</gene>
<geneLocation type="chloroplast"/>